<gene>
    <name evidence="1" type="primary">glmM</name>
    <name type="ordered locus">THEYE_A0046</name>
</gene>
<feature type="chain" id="PRO_1000185392" description="Phosphoglucosamine mutase">
    <location>
        <begin position="1"/>
        <end position="451"/>
    </location>
</feature>
<feature type="active site" description="Phosphoserine intermediate" evidence="1">
    <location>
        <position position="101"/>
    </location>
</feature>
<feature type="binding site" description="via phosphate group" evidence="1">
    <location>
        <position position="101"/>
    </location>
    <ligand>
        <name>Mg(2+)</name>
        <dbReference type="ChEBI" id="CHEBI:18420"/>
    </ligand>
</feature>
<feature type="binding site" evidence="1">
    <location>
        <position position="243"/>
    </location>
    <ligand>
        <name>Mg(2+)</name>
        <dbReference type="ChEBI" id="CHEBI:18420"/>
    </ligand>
</feature>
<feature type="binding site" evidence="1">
    <location>
        <position position="245"/>
    </location>
    <ligand>
        <name>Mg(2+)</name>
        <dbReference type="ChEBI" id="CHEBI:18420"/>
    </ligand>
</feature>
<feature type="binding site" evidence="1">
    <location>
        <position position="247"/>
    </location>
    <ligand>
        <name>Mg(2+)</name>
        <dbReference type="ChEBI" id="CHEBI:18420"/>
    </ligand>
</feature>
<feature type="modified residue" description="Phosphoserine" evidence="1">
    <location>
        <position position="101"/>
    </location>
</feature>
<organism>
    <name type="scientific">Thermodesulfovibrio yellowstonii (strain ATCC 51303 / DSM 11347 / YP87)</name>
    <dbReference type="NCBI Taxonomy" id="289376"/>
    <lineage>
        <taxon>Bacteria</taxon>
        <taxon>Pseudomonadati</taxon>
        <taxon>Nitrospirota</taxon>
        <taxon>Thermodesulfovibrionia</taxon>
        <taxon>Thermodesulfovibrionales</taxon>
        <taxon>Thermodesulfovibrionaceae</taxon>
        <taxon>Thermodesulfovibrio</taxon>
    </lineage>
</organism>
<proteinExistence type="inferred from homology"/>
<sequence>MRIFGTDGIRGTINNYPMTPEVCLRAGMALCFLLKKRLPHKPKILIGKDTRISGYVIESALTSGITSMGGDVYLVGPIPTPAVAFLVKSMRVDAGIVISASHNPFSDNGIKIFSNDGFKLTEELENDIEKLINDKDFPAIRPSARELGKAYRIEDAQGRYIEFIKSTLPKDSNLEGLKVAIDPANGAAYKITPTLFHELGAEVITINDKPDGVNINKECGALYPESLIKIVKETQAHFGVAHDGDADRTILVDEKGNIVDGDFILTILAEELKKERKLKKNTVVATIMTNMGVENYLKNAGIKMIRTKVGDKYVVEEMLKGGYNLGGEQSGHIICMDYTNTGDGPITAVQMAYIIKKNQFYLSELIKNIPRYPQALKNIKIPEKLPKDEVKNVIKKLSQKASTLEKNMRGRIIIRPSGTEPKIRIMVEDENPERLKQVLDELEAVANMMLS</sequence>
<reference key="1">
    <citation type="submission" date="2008-08" db="EMBL/GenBank/DDBJ databases">
        <title>The complete genome sequence of Thermodesulfovibrio yellowstonii strain ATCC 51303 / DSM 11347 / YP87.</title>
        <authorList>
            <person name="Dodson R.J."/>
            <person name="Durkin A.S."/>
            <person name="Wu M."/>
            <person name="Eisen J."/>
            <person name="Sutton G."/>
        </authorList>
    </citation>
    <scope>NUCLEOTIDE SEQUENCE [LARGE SCALE GENOMIC DNA]</scope>
    <source>
        <strain>ATCC 51303 / DSM 11347 / YP87</strain>
    </source>
</reference>
<name>GLMM_THEYD</name>
<comment type="function">
    <text evidence="1">Catalyzes the conversion of glucosamine-6-phosphate to glucosamine-1-phosphate.</text>
</comment>
<comment type="catalytic activity">
    <reaction evidence="1">
        <text>alpha-D-glucosamine 1-phosphate = D-glucosamine 6-phosphate</text>
        <dbReference type="Rhea" id="RHEA:23424"/>
        <dbReference type="ChEBI" id="CHEBI:58516"/>
        <dbReference type="ChEBI" id="CHEBI:58725"/>
        <dbReference type="EC" id="5.4.2.10"/>
    </reaction>
</comment>
<comment type="cofactor">
    <cofactor evidence="1">
        <name>Mg(2+)</name>
        <dbReference type="ChEBI" id="CHEBI:18420"/>
    </cofactor>
    <text evidence="1">Binds 1 Mg(2+) ion per subunit.</text>
</comment>
<comment type="PTM">
    <text evidence="1">Activated by phosphorylation.</text>
</comment>
<comment type="similarity">
    <text evidence="1">Belongs to the phosphohexose mutase family.</text>
</comment>
<keyword id="KW-0413">Isomerase</keyword>
<keyword id="KW-0460">Magnesium</keyword>
<keyword id="KW-0479">Metal-binding</keyword>
<keyword id="KW-0597">Phosphoprotein</keyword>
<keyword id="KW-1185">Reference proteome</keyword>
<evidence type="ECO:0000255" key="1">
    <source>
        <dbReference type="HAMAP-Rule" id="MF_01554"/>
    </source>
</evidence>
<dbReference type="EC" id="5.4.2.10" evidence="1"/>
<dbReference type="EMBL" id="CP001147">
    <property type="protein sequence ID" value="ACI22107.1"/>
    <property type="molecule type" value="Genomic_DNA"/>
</dbReference>
<dbReference type="RefSeq" id="WP_012546798.1">
    <property type="nucleotide sequence ID" value="NC_011296.1"/>
</dbReference>
<dbReference type="RefSeq" id="YP_002247900.1">
    <property type="nucleotide sequence ID" value="NC_011296.1"/>
</dbReference>
<dbReference type="SMR" id="B5YGX0"/>
<dbReference type="FunCoup" id="B5YGX0">
    <property type="interactions" value="369"/>
</dbReference>
<dbReference type="STRING" id="289376.THEYE_A0046"/>
<dbReference type="EnsemblBacteria" id="ACI22107">
    <property type="protein sequence ID" value="ACI22107"/>
    <property type="gene ID" value="THEYE_A0046"/>
</dbReference>
<dbReference type="KEGG" id="tye:THEYE_A0046"/>
<dbReference type="PATRIC" id="fig|289376.4.peg.46"/>
<dbReference type="eggNOG" id="COG1109">
    <property type="taxonomic scope" value="Bacteria"/>
</dbReference>
<dbReference type="HOGENOM" id="CLU_016950_7_0_0"/>
<dbReference type="InParanoid" id="B5YGX0"/>
<dbReference type="OrthoDB" id="9806956at2"/>
<dbReference type="Proteomes" id="UP000000718">
    <property type="component" value="Chromosome"/>
</dbReference>
<dbReference type="GO" id="GO:0005829">
    <property type="term" value="C:cytosol"/>
    <property type="evidence" value="ECO:0000318"/>
    <property type="project" value="GO_Central"/>
</dbReference>
<dbReference type="GO" id="GO:0000287">
    <property type="term" value="F:magnesium ion binding"/>
    <property type="evidence" value="ECO:0007669"/>
    <property type="project" value="UniProtKB-UniRule"/>
</dbReference>
<dbReference type="GO" id="GO:0008966">
    <property type="term" value="F:phosphoglucosamine mutase activity"/>
    <property type="evidence" value="ECO:0000318"/>
    <property type="project" value="GO_Central"/>
</dbReference>
<dbReference type="GO" id="GO:0004615">
    <property type="term" value="F:phosphomannomutase activity"/>
    <property type="evidence" value="ECO:0000318"/>
    <property type="project" value="GO_Central"/>
</dbReference>
<dbReference type="GO" id="GO:0005975">
    <property type="term" value="P:carbohydrate metabolic process"/>
    <property type="evidence" value="ECO:0007669"/>
    <property type="project" value="InterPro"/>
</dbReference>
<dbReference type="GO" id="GO:0009252">
    <property type="term" value="P:peptidoglycan biosynthetic process"/>
    <property type="evidence" value="ECO:0000318"/>
    <property type="project" value="GO_Central"/>
</dbReference>
<dbReference type="GO" id="GO:0006048">
    <property type="term" value="P:UDP-N-acetylglucosamine biosynthetic process"/>
    <property type="evidence" value="ECO:0000318"/>
    <property type="project" value="GO_Central"/>
</dbReference>
<dbReference type="CDD" id="cd05802">
    <property type="entry name" value="GlmM"/>
    <property type="match status" value="1"/>
</dbReference>
<dbReference type="FunFam" id="3.40.120.10:FF:000001">
    <property type="entry name" value="Phosphoglucosamine mutase"/>
    <property type="match status" value="1"/>
</dbReference>
<dbReference type="FunFam" id="3.40.120.10:FF:000002">
    <property type="entry name" value="Phosphoglucosamine mutase"/>
    <property type="match status" value="1"/>
</dbReference>
<dbReference type="Gene3D" id="3.40.120.10">
    <property type="entry name" value="Alpha-D-Glucose-1,6-Bisphosphate, subunit A, domain 3"/>
    <property type="match status" value="3"/>
</dbReference>
<dbReference type="Gene3D" id="3.30.310.50">
    <property type="entry name" value="Alpha-D-phosphohexomutase, C-terminal domain"/>
    <property type="match status" value="1"/>
</dbReference>
<dbReference type="HAMAP" id="MF_01554_B">
    <property type="entry name" value="GlmM_B"/>
    <property type="match status" value="1"/>
</dbReference>
<dbReference type="InterPro" id="IPR005844">
    <property type="entry name" value="A-D-PHexomutase_a/b/a-I"/>
</dbReference>
<dbReference type="InterPro" id="IPR016055">
    <property type="entry name" value="A-D-PHexomutase_a/b/a-I/II/III"/>
</dbReference>
<dbReference type="InterPro" id="IPR005845">
    <property type="entry name" value="A-D-PHexomutase_a/b/a-II"/>
</dbReference>
<dbReference type="InterPro" id="IPR005846">
    <property type="entry name" value="A-D-PHexomutase_a/b/a-III"/>
</dbReference>
<dbReference type="InterPro" id="IPR005843">
    <property type="entry name" value="A-D-PHexomutase_C"/>
</dbReference>
<dbReference type="InterPro" id="IPR036900">
    <property type="entry name" value="A-D-PHexomutase_C_sf"/>
</dbReference>
<dbReference type="InterPro" id="IPR016066">
    <property type="entry name" value="A-D-PHexomutase_CS"/>
</dbReference>
<dbReference type="InterPro" id="IPR005841">
    <property type="entry name" value="Alpha-D-phosphohexomutase_SF"/>
</dbReference>
<dbReference type="InterPro" id="IPR006352">
    <property type="entry name" value="GlmM_bact"/>
</dbReference>
<dbReference type="InterPro" id="IPR050060">
    <property type="entry name" value="Phosphoglucosamine_mutase"/>
</dbReference>
<dbReference type="NCBIfam" id="TIGR01455">
    <property type="entry name" value="glmM"/>
    <property type="match status" value="1"/>
</dbReference>
<dbReference type="NCBIfam" id="NF008139">
    <property type="entry name" value="PRK10887.1"/>
    <property type="match status" value="1"/>
</dbReference>
<dbReference type="PANTHER" id="PTHR42946:SF1">
    <property type="entry name" value="PHOSPHOGLUCOMUTASE (ALPHA-D-GLUCOSE-1,6-BISPHOSPHATE-DEPENDENT)"/>
    <property type="match status" value="1"/>
</dbReference>
<dbReference type="PANTHER" id="PTHR42946">
    <property type="entry name" value="PHOSPHOHEXOSE MUTASE"/>
    <property type="match status" value="1"/>
</dbReference>
<dbReference type="Pfam" id="PF02878">
    <property type="entry name" value="PGM_PMM_I"/>
    <property type="match status" value="1"/>
</dbReference>
<dbReference type="Pfam" id="PF02879">
    <property type="entry name" value="PGM_PMM_II"/>
    <property type="match status" value="1"/>
</dbReference>
<dbReference type="Pfam" id="PF02880">
    <property type="entry name" value="PGM_PMM_III"/>
    <property type="match status" value="1"/>
</dbReference>
<dbReference type="Pfam" id="PF00408">
    <property type="entry name" value="PGM_PMM_IV"/>
    <property type="match status" value="1"/>
</dbReference>
<dbReference type="PRINTS" id="PR00509">
    <property type="entry name" value="PGMPMM"/>
</dbReference>
<dbReference type="SUPFAM" id="SSF55957">
    <property type="entry name" value="Phosphoglucomutase, C-terminal domain"/>
    <property type="match status" value="1"/>
</dbReference>
<dbReference type="SUPFAM" id="SSF53738">
    <property type="entry name" value="Phosphoglucomutase, first 3 domains"/>
    <property type="match status" value="3"/>
</dbReference>
<dbReference type="PROSITE" id="PS00710">
    <property type="entry name" value="PGM_PMM"/>
    <property type="match status" value="1"/>
</dbReference>
<protein>
    <recommendedName>
        <fullName evidence="1">Phosphoglucosamine mutase</fullName>
        <ecNumber evidence="1">5.4.2.10</ecNumber>
    </recommendedName>
</protein>
<accession>B5YGX0</accession>